<evidence type="ECO:0000255" key="1">
    <source>
        <dbReference type="PROSITE-ProRule" id="PRU00574"/>
    </source>
</evidence>
<evidence type="ECO:0000256" key="2">
    <source>
        <dbReference type="SAM" id="MobiDB-lite"/>
    </source>
</evidence>
<keyword id="KW-1185">Reference proteome</keyword>
<accession>Q86JM4</accession>
<accession>Q55A84</accession>
<reference key="1">
    <citation type="journal article" date="2002" name="Nature">
        <title>Sequence and analysis of chromosome 2 of Dictyostelium discoideum.</title>
        <authorList>
            <person name="Gloeckner G."/>
            <person name="Eichinger L."/>
            <person name="Szafranski K."/>
            <person name="Pachebat J.A."/>
            <person name="Bankier A.T."/>
            <person name="Dear P.H."/>
            <person name="Lehmann R."/>
            <person name="Baumgart C."/>
            <person name="Parra G."/>
            <person name="Abril J.F."/>
            <person name="Guigo R."/>
            <person name="Kumpf K."/>
            <person name="Tunggal B."/>
            <person name="Cox E.C."/>
            <person name="Quail M.A."/>
            <person name="Platzer M."/>
            <person name="Rosenthal A."/>
            <person name="Noegel A.A."/>
        </authorList>
    </citation>
    <scope>NUCLEOTIDE SEQUENCE [LARGE SCALE GENOMIC DNA]</scope>
    <source>
        <strain>AX4</strain>
    </source>
</reference>
<reference key="2">
    <citation type="journal article" date="2005" name="Nature">
        <title>The genome of the social amoeba Dictyostelium discoideum.</title>
        <authorList>
            <person name="Eichinger L."/>
            <person name="Pachebat J.A."/>
            <person name="Gloeckner G."/>
            <person name="Rajandream M.A."/>
            <person name="Sucgang R."/>
            <person name="Berriman M."/>
            <person name="Song J."/>
            <person name="Olsen R."/>
            <person name="Szafranski K."/>
            <person name="Xu Q."/>
            <person name="Tunggal B."/>
            <person name="Kummerfeld S."/>
            <person name="Madera M."/>
            <person name="Konfortov B.A."/>
            <person name="Rivero F."/>
            <person name="Bankier A.T."/>
            <person name="Lehmann R."/>
            <person name="Hamlin N."/>
            <person name="Davies R."/>
            <person name="Gaudet P."/>
            <person name="Fey P."/>
            <person name="Pilcher K."/>
            <person name="Chen G."/>
            <person name="Saunders D."/>
            <person name="Sodergren E.J."/>
            <person name="Davis P."/>
            <person name="Kerhornou A."/>
            <person name="Nie X."/>
            <person name="Hall N."/>
            <person name="Anjard C."/>
            <person name="Hemphill L."/>
            <person name="Bason N."/>
            <person name="Farbrother P."/>
            <person name="Desany B."/>
            <person name="Just E."/>
            <person name="Morio T."/>
            <person name="Rost R."/>
            <person name="Churcher C.M."/>
            <person name="Cooper J."/>
            <person name="Haydock S."/>
            <person name="van Driessche N."/>
            <person name="Cronin A."/>
            <person name="Goodhead I."/>
            <person name="Muzny D.M."/>
            <person name="Mourier T."/>
            <person name="Pain A."/>
            <person name="Lu M."/>
            <person name="Harper D."/>
            <person name="Lindsay R."/>
            <person name="Hauser H."/>
            <person name="James K.D."/>
            <person name="Quiles M."/>
            <person name="Madan Babu M."/>
            <person name="Saito T."/>
            <person name="Buchrieser C."/>
            <person name="Wardroper A."/>
            <person name="Felder M."/>
            <person name="Thangavelu M."/>
            <person name="Johnson D."/>
            <person name="Knights A."/>
            <person name="Loulseged H."/>
            <person name="Mungall K.L."/>
            <person name="Oliver K."/>
            <person name="Price C."/>
            <person name="Quail M.A."/>
            <person name="Urushihara H."/>
            <person name="Hernandez J."/>
            <person name="Rabbinowitsch E."/>
            <person name="Steffen D."/>
            <person name="Sanders M."/>
            <person name="Ma J."/>
            <person name="Kohara Y."/>
            <person name="Sharp S."/>
            <person name="Simmonds M.N."/>
            <person name="Spiegler S."/>
            <person name="Tivey A."/>
            <person name="Sugano S."/>
            <person name="White B."/>
            <person name="Walker D."/>
            <person name="Woodward J.R."/>
            <person name="Winckler T."/>
            <person name="Tanaka Y."/>
            <person name="Shaulsky G."/>
            <person name="Schleicher M."/>
            <person name="Weinstock G.M."/>
            <person name="Rosenthal A."/>
            <person name="Cox E.C."/>
            <person name="Chisholm R.L."/>
            <person name="Gibbs R.A."/>
            <person name="Loomis W.F."/>
            <person name="Platzer M."/>
            <person name="Kay R.R."/>
            <person name="Williams J.G."/>
            <person name="Dear P.H."/>
            <person name="Noegel A.A."/>
            <person name="Barrell B.G."/>
            <person name="Kuspa A."/>
        </authorList>
    </citation>
    <scope>NUCLEOTIDE SEQUENCE [LARGE SCALE GENOMIC DNA]</scope>
    <source>
        <strain>AX4</strain>
    </source>
</reference>
<protein>
    <recommendedName>
        <fullName>DCN1-like protein 2</fullName>
    </recommendedName>
    <alternativeName>
        <fullName>Defective in cullin neddylation protein 1-like protein 2</fullName>
    </alternativeName>
</protein>
<sequence length="267" mass="30102">MTRKYTKKSSGSTASTTNSTAEIVDLTTSTSSVGKKRKSPDEKAQPITKKALNSLTPVQSMFEKYKGKNIIKAIHYTYLYTYIFNVHLDDDETIGPEGIARFCSDIGLAPDSFEILVLAWTMNASKMGYFSKNEFSSGFEKLQCSDLSTLKKQLNSTSQKLKHDSTKFTDLYKYAFGFASEVESKKSVDLGTAAEMLKLLLPEGPHTTNFAAFLCTQPNKSINKDQWLCFLEFSRTVKADLSNYDDSEAWPLLLDQFSEWVQQEKRI</sequence>
<gene>
    <name type="ORF">DDB_G0272016</name>
</gene>
<feature type="chain" id="PRO_0000330841" description="DCN1-like protein 2">
    <location>
        <begin position="1"/>
        <end position="267"/>
    </location>
</feature>
<feature type="domain" description="DCUN1" evidence="1">
    <location>
        <begin position="75"/>
        <end position="262"/>
    </location>
</feature>
<feature type="region of interest" description="Disordered" evidence="2">
    <location>
        <begin position="1"/>
        <end position="48"/>
    </location>
</feature>
<feature type="compositionally biased region" description="Low complexity" evidence="2">
    <location>
        <begin position="8"/>
        <end position="21"/>
    </location>
</feature>
<organism>
    <name type="scientific">Dictyostelium discoideum</name>
    <name type="common">Social amoeba</name>
    <dbReference type="NCBI Taxonomy" id="44689"/>
    <lineage>
        <taxon>Eukaryota</taxon>
        <taxon>Amoebozoa</taxon>
        <taxon>Evosea</taxon>
        <taxon>Eumycetozoa</taxon>
        <taxon>Dictyostelia</taxon>
        <taxon>Dictyosteliales</taxon>
        <taxon>Dictyosteliaceae</taxon>
        <taxon>Dictyostelium</taxon>
    </lineage>
</organism>
<proteinExistence type="predicted"/>
<dbReference type="EMBL" id="AAFI02000007">
    <property type="protein sequence ID" value="EAL71442.1"/>
    <property type="molecule type" value="Genomic_DNA"/>
</dbReference>
<dbReference type="RefSeq" id="XP_645382.1">
    <property type="nucleotide sequence ID" value="XM_640290.1"/>
</dbReference>
<dbReference type="SMR" id="Q86JM4"/>
<dbReference type="FunCoup" id="Q86JM4">
    <property type="interactions" value="7"/>
</dbReference>
<dbReference type="STRING" id="44689.Q86JM4"/>
<dbReference type="PaxDb" id="44689-DDB0305271"/>
<dbReference type="EnsemblProtists" id="EAL71442">
    <property type="protein sequence ID" value="EAL71442"/>
    <property type="gene ID" value="DDB_G0272016"/>
</dbReference>
<dbReference type="GeneID" id="8618271"/>
<dbReference type="KEGG" id="ddi:DDB_G0272016"/>
<dbReference type="dictyBase" id="DDB_G0272016"/>
<dbReference type="VEuPathDB" id="AmoebaDB:DDB_G0272016"/>
<dbReference type="eggNOG" id="KOG3077">
    <property type="taxonomic scope" value="Eukaryota"/>
</dbReference>
<dbReference type="InParanoid" id="Q86JM4"/>
<dbReference type="OMA" id="HERKCKI"/>
<dbReference type="PhylomeDB" id="Q86JM4"/>
<dbReference type="Reactome" id="R-DDI-8951664">
    <property type="pathway name" value="Neddylation"/>
</dbReference>
<dbReference type="PRO" id="PR:Q86JM4"/>
<dbReference type="Proteomes" id="UP000002195">
    <property type="component" value="Chromosome 2"/>
</dbReference>
<dbReference type="GO" id="GO:0000151">
    <property type="term" value="C:ubiquitin ligase complex"/>
    <property type="evidence" value="ECO:0000318"/>
    <property type="project" value="GO_Central"/>
</dbReference>
<dbReference type="GO" id="GO:0097602">
    <property type="term" value="F:cullin family protein binding"/>
    <property type="evidence" value="ECO:0000318"/>
    <property type="project" value="GO_Central"/>
</dbReference>
<dbReference type="GO" id="GO:0031624">
    <property type="term" value="F:ubiquitin conjugating enzyme binding"/>
    <property type="evidence" value="ECO:0000318"/>
    <property type="project" value="GO_Central"/>
</dbReference>
<dbReference type="GO" id="GO:0032182">
    <property type="term" value="F:ubiquitin-like protein binding"/>
    <property type="evidence" value="ECO:0000318"/>
    <property type="project" value="GO_Central"/>
</dbReference>
<dbReference type="GO" id="GO:0045116">
    <property type="term" value="P:protein neddylation"/>
    <property type="evidence" value="ECO:0000318"/>
    <property type="project" value="GO_Central"/>
</dbReference>
<dbReference type="Gene3D" id="1.10.238.200">
    <property type="entry name" value="Cullin, PONY binding domain"/>
    <property type="match status" value="1"/>
</dbReference>
<dbReference type="Gene3D" id="1.10.238.10">
    <property type="entry name" value="EF-hand"/>
    <property type="match status" value="1"/>
</dbReference>
<dbReference type="InterPro" id="IPR014764">
    <property type="entry name" value="DCN-prot"/>
</dbReference>
<dbReference type="InterPro" id="IPR042460">
    <property type="entry name" value="DCN1-like_PONY"/>
</dbReference>
<dbReference type="InterPro" id="IPR005176">
    <property type="entry name" value="PONY_dom"/>
</dbReference>
<dbReference type="PANTHER" id="PTHR12281:SF12">
    <property type="entry name" value="DEFECTIVE IN CULLIN NEDDYLATION PROTEIN"/>
    <property type="match status" value="1"/>
</dbReference>
<dbReference type="PANTHER" id="PTHR12281">
    <property type="entry name" value="RP42 RELATED"/>
    <property type="match status" value="1"/>
</dbReference>
<dbReference type="Pfam" id="PF03556">
    <property type="entry name" value="Cullin_binding"/>
    <property type="match status" value="1"/>
</dbReference>
<dbReference type="PROSITE" id="PS51229">
    <property type="entry name" value="DCUN1"/>
    <property type="match status" value="1"/>
</dbReference>
<name>DCN1M_DICDI</name>